<proteinExistence type="evidence at protein level"/>
<accession>Q10R47</accession>
<accession>A0A0P0VTQ4</accession>
<reference key="1">
    <citation type="journal article" date="2005" name="Genome Res.">
        <title>Sequence, annotation, and analysis of synteny between rice chromosome 3 and diverged grass species.</title>
        <authorList>
            <consortium name="The rice chromosome 3 sequencing consortium"/>
            <person name="Buell C.R."/>
            <person name="Yuan Q."/>
            <person name="Ouyang S."/>
            <person name="Liu J."/>
            <person name="Zhu W."/>
            <person name="Wang A."/>
            <person name="Maiti R."/>
            <person name="Haas B."/>
            <person name="Wortman J."/>
            <person name="Pertea M."/>
            <person name="Jones K.M."/>
            <person name="Kim M."/>
            <person name="Overton L."/>
            <person name="Tsitrin T."/>
            <person name="Fadrosh D."/>
            <person name="Bera J."/>
            <person name="Weaver B."/>
            <person name="Jin S."/>
            <person name="Johri S."/>
            <person name="Reardon M."/>
            <person name="Webb K."/>
            <person name="Hill J."/>
            <person name="Moffat K."/>
            <person name="Tallon L."/>
            <person name="Van Aken S."/>
            <person name="Lewis M."/>
            <person name="Utterback T."/>
            <person name="Feldblyum T."/>
            <person name="Zismann V."/>
            <person name="Iobst S."/>
            <person name="Hsiao J."/>
            <person name="de Vazeille A.R."/>
            <person name="Salzberg S.L."/>
            <person name="White O."/>
            <person name="Fraser C.M."/>
            <person name="Yu Y."/>
            <person name="Kim H."/>
            <person name="Rambo T."/>
            <person name="Currie J."/>
            <person name="Collura K."/>
            <person name="Kernodle-Thompson S."/>
            <person name="Wei F."/>
            <person name="Kudrna K."/>
            <person name="Ammiraju J.S.S."/>
            <person name="Luo M."/>
            <person name="Goicoechea J.L."/>
            <person name="Wing R.A."/>
            <person name="Henry D."/>
            <person name="Oates R."/>
            <person name="Palmer M."/>
            <person name="Pries G."/>
            <person name="Saski C."/>
            <person name="Simmons J."/>
            <person name="Soderlund C."/>
            <person name="Nelson W."/>
            <person name="de la Bastide M."/>
            <person name="Spiegel L."/>
            <person name="Nascimento L."/>
            <person name="Huang E."/>
            <person name="Preston R."/>
            <person name="Zutavern T."/>
            <person name="Palmer L."/>
            <person name="O'Shaughnessy A."/>
            <person name="Dike S."/>
            <person name="McCombie W.R."/>
            <person name="Minx P."/>
            <person name="Cordum H."/>
            <person name="Wilson R."/>
            <person name="Jin W."/>
            <person name="Lee H.R."/>
            <person name="Jiang J."/>
            <person name="Jackson S."/>
        </authorList>
    </citation>
    <scope>NUCLEOTIDE SEQUENCE [LARGE SCALE GENOMIC DNA]</scope>
    <source>
        <strain>cv. Nipponbare</strain>
    </source>
</reference>
<reference key="2">
    <citation type="journal article" date="2005" name="Nature">
        <title>The map-based sequence of the rice genome.</title>
        <authorList>
            <consortium name="International rice genome sequencing project (IRGSP)"/>
        </authorList>
    </citation>
    <scope>NUCLEOTIDE SEQUENCE [LARGE SCALE GENOMIC DNA]</scope>
    <source>
        <strain>cv. Nipponbare</strain>
    </source>
</reference>
<reference key="3">
    <citation type="journal article" date="2008" name="Nucleic Acids Res.">
        <title>The rice annotation project database (RAP-DB): 2008 update.</title>
        <authorList>
            <consortium name="The rice annotation project (RAP)"/>
        </authorList>
    </citation>
    <scope>GENOME REANNOTATION</scope>
    <source>
        <strain>cv. Nipponbare</strain>
    </source>
</reference>
<reference key="4">
    <citation type="journal article" date="2013" name="Rice">
        <title>Improvement of the Oryza sativa Nipponbare reference genome using next generation sequence and optical map data.</title>
        <authorList>
            <person name="Kawahara Y."/>
            <person name="de la Bastide M."/>
            <person name="Hamilton J.P."/>
            <person name="Kanamori H."/>
            <person name="McCombie W.R."/>
            <person name="Ouyang S."/>
            <person name="Schwartz D.C."/>
            <person name="Tanaka T."/>
            <person name="Wu J."/>
            <person name="Zhou S."/>
            <person name="Childs K.L."/>
            <person name="Davidson R.M."/>
            <person name="Lin H."/>
            <person name="Quesada-Ocampo L."/>
            <person name="Vaillancourt B."/>
            <person name="Sakai H."/>
            <person name="Lee S.S."/>
            <person name="Kim J."/>
            <person name="Numa H."/>
            <person name="Itoh T."/>
            <person name="Buell C.R."/>
            <person name="Matsumoto T."/>
        </authorList>
    </citation>
    <scope>GENOME REANNOTATION</scope>
    <source>
        <strain>cv. Nipponbare</strain>
    </source>
</reference>
<reference key="5">
    <citation type="journal article" date="2005" name="PLoS Biol.">
        <title>The genomes of Oryza sativa: a history of duplications.</title>
        <authorList>
            <person name="Yu J."/>
            <person name="Wang J."/>
            <person name="Lin W."/>
            <person name="Li S."/>
            <person name="Li H."/>
            <person name="Zhou J."/>
            <person name="Ni P."/>
            <person name="Dong W."/>
            <person name="Hu S."/>
            <person name="Zeng C."/>
            <person name="Zhang J."/>
            <person name="Zhang Y."/>
            <person name="Li R."/>
            <person name="Xu Z."/>
            <person name="Li S."/>
            <person name="Li X."/>
            <person name="Zheng H."/>
            <person name="Cong L."/>
            <person name="Lin L."/>
            <person name="Yin J."/>
            <person name="Geng J."/>
            <person name="Li G."/>
            <person name="Shi J."/>
            <person name="Liu J."/>
            <person name="Lv H."/>
            <person name="Li J."/>
            <person name="Wang J."/>
            <person name="Deng Y."/>
            <person name="Ran L."/>
            <person name="Shi X."/>
            <person name="Wang X."/>
            <person name="Wu Q."/>
            <person name="Li C."/>
            <person name="Ren X."/>
            <person name="Wang J."/>
            <person name="Wang X."/>
            <person name="Li D."/>
            <person name="Liu D."/>
            <person name="Zhang X."/>
            <person name="Ji Z."/>
            <person name="Zhao W."/>
            <person name="Sun Y."/>
            <person name="Zhang Z."/>
            <person name="Bao J."/>
            <person name="Han Y."/>
            <person name="Dong L."/>
            <person name="Ji J."/>
            <person name="Chen P."/>
            <person name="Wu S."/>
            <person name="Liu J."/>
            <person name="Xiao Y."/>
            <person name="Bu D."/>
            <person name="Tan J."/>
            <person name="Yang L."/>
            <person name="Ye C."/>
            <person name="Zhang J."/>
            <person name="Xu J."/>
            <person name="Zhou Y."/>
            <person name="Yu Y."/>
            <person name="Zhang B."/>
            <person name="Zhuang S."/>
            <person name="Wei H."/>
            <person name="Liu B."/>
            <person name="Lei M."/>
            <person name="Yu H."/>
            <person name="Li Y."/>
            <person name="Xu H."/>
            <person name="Wei S."/>
            <person name="He X."/>
            <person name="Fang L."/>
            <person name="Zhang Z."/>
            <person name="Zhang Y."/>
            <person name="Huang X."/>
            <person name="Su Z."/>
            <person name="Tong W."/>
            <person name="Li J."/>
            <person name="Tong Z."/>
            <person name="Li S."/>
            <person name="Ye J."/>
            <person name="Wang L."/>
            <person name="Fang L."/>
            <person name="Lei T."/>
            <person name="Chen C.-S."/>
            <person name="Chen H.-C."/>
            <person name="Xu Z."/>
            <person name="Li H."/>
            <person name="Huang H."/>
            <person name="Zhang F."/>
            <person name="Xu H."/>
            <person name="Li N."/>
            <person name="Zhao C."/>
            <person name="Li S."/>
            <person name="Dong L."/>
            <person name="Huang Y."/>
            <person name="Li L."/>
            <person name="Xi Y."/>
            <person name="Qi Q."/>
            <person name="Li W."/>
            <person name="Zhang B."/>
            <person name="Hu W."/>
            <person name="Zhang Y."/>
            <person name="Tian X."/>
            <person name="Jiao Y."/>
            <person name="Liang X."/>
            <person name="Jin J."/>
            <person name="Gao L."/>
            <person name="Zheng W."/>
            <person name="Hao B."/>
            <person name="Liu S.-M."/>
            <person name="Wang W."/>
            <person name="Yuan L."/>
            <person name="Cao M."/>
            <person name="McDermott J."/>
            <person name="Samudrala R."/>
            <person name="Wang J."/>
            <person name="Wong G.K.-S."/>
            <person name="Yang H."/>
        </authorList>
    </citation>
    <scope>NUCLEOTIDE SEQUENCE [LARGE SCALE GENOMIC DNA]</scope>
    <source>
        <strain>cv. Nipponbare</strain>
    </source>
</reference>
<reference key="6">
    <citation type="submission" date="2006-10" db="EMBL/GenBank/DDBJ databases">
        <title>Oryza sativa full length cDNA.</title>
        <authorList>
            <consortium name="The rice full-length cDNA consortium"/>
        </authorList>
    </citation>
    <scope>NUCLEOTIDE SEQUENCE [LARGE SCALE MRNA]</scope>
    <source>
        <strain>cv. Nipponbare</strain>
    </source>
</reference>
<reference key="7">
    <citation type="journal article" date="2010" name="Plant Physiol.">
        <title>Genome-wide classification and evolutionary analysis of the bHLH family of transcription factors in Arabidopsis, poplar, rice, moss, and algae.</title>
        <authorList>
            <person name="Carretero-Paulet L."/>
            <person name="Galstyan A."/>
            <person name="Roig-Villanova I."/>
            <person name="Martinez-Garcia J.F."/>
            <person name="Bilbao-Castro J.R."/>
            <person name="Robertson D.L."/>
        </authorList>
    </citation>
    <scope>GENE FAMILY</scope>
    <scope>NOMENCLATURE</scope>
</reference>
<reference key="8">
    <citation type="journal article" date="2017" name="Plant Physiol.">
        <title>Rice leaf angle and grain size are affected by the OsBUL1 transcriptional activator complex.</title>
        <authorList>
            <person name="Jang S."/>
            <person name="An G."/>
            <person name="Li H.-Y."/>
        </authorList>
    </citation>
    <scope>INTERACTION WITH LO9-177</scope>
</reference>
<protein>
    <recommendedName>
        <fullName>Transcription factor ILI3</fullName>
        <shortName>OsILI3</shortName>
    </recommendedName>
    <alternativeName>
        <fullName evidence="4">Basic helix-loop-helix protein 153</fullName>
        <shortName evidence="4">OsbHLH153</shortName>
    </alternativeName>
    <alternativeName>
        <fullName evidence="5">Protein BRASSINOSTEROID UP-REGULATED 1-LIKE 2</fullName>
        <shortName evidence="5">OsBUL2</shortName>
    </alternativeName>
    <alternativeName>
        <fullName>Protein INCREASED LEAF INCLINATION 3</fullName>
    </alternativeName>
    <alternativeName>
        <fullName evidence="4">bHLH transcription factor bHLH153</fullName>
    </alternativeName>
</protein>
<keyword id="KW-0341">Growth regulation</keyword>
<keyword id="KW-1185">Reference proteome</keyword>
<keyword id="KW-0804">Transcription</keyword>
<keyword id="KW-0805">Transcription regulation</keyword>
<gene>
    <name type="primary">ILI3</name>
    <name evidence="4" type="synonym">BHLH153</name>
    <name evidence="5" type="synonym">BUL2</name>
    <name evidence="6" type="ordered locus">Os03g0171700</name>
    <name evidence="6" type="ordered locus">LOC_Os03g07540</name>
    <name evidence="7" type="ORF">OsJ_09590</name>
</gene>
<comment type="function">
    <text evidence="1">Atypical and probable non DNA-binding bHLH transcription factor that integrates multiple signaling pathways to regulate cell elongation and plant development.</text>
</comment>
<comment type="subunit">
    <text evidence="3">Interacts with LO9-177.</text>
</comment>
<comment type="similarity">
    <text>Belongs to the bHLH protein family.</text>
</comment>
<name>ILI3_ORYSJ</name>
<evidence type="ECO:0000250" key="1"/>
<evidence type="ECO:0000255" key="2">
    <source>
        <dbReference type="PROSITE-ProRule" id="PRU00981"/>
    </source>
</evidence>
<evidence type="ECO:0000269" key="3">
    <source>
    </source>
</evidence>
<evidence type="ECO:0000303" key="4">
    <source>
    </source>
</evidence>
<evidence type="ECO:0000303" key="5">
    <source>
    </source>
</evidence>
<evidence type="ECO:0000305" key="6"/>
<evidence type="ECO:0000312" key="7">
    <source>
        <dbReference type="EMBL" id="EAZ25751.1"/>
    </source>
</evidence>
<feature type="chain" id="PRO_0000429092" description="Transcription factor ILI3">
    <location>
        <begin position="1"/>
        <end position="91"/>
    </location>
</feature>
<feature type="domain" description="bHLH" evidence="2">
    <location>
        <begin position="3"/>
        <end position="58"/>
    </location>
</feature>
<dbReference type="EMBL" id="DP000009">
    <property type="protein sequence ID" value="ABF94221.1"/>
    <property type="molecule type" value="Genomic_DNA"/>
</dbReference>
<dbReference type="EMBL" id="AP008209">
    <property type="protein sequence ID" value="BAF11028.1"/>
    <property type="molecule type" value="Genomic_DNA"/>
</dbReference>
<dbReference type="EMBL" id="AP014959">
    <property type="protein sequence ID" value="BAS82538.1"/>
    <property type="molecule type" value="Genomic_DNA"/>
</dbReference>
<dbReference type="EMBL" id="CM000140">
    <property type="protein sequence ID" value="EAZ25751.1"/>
    <property type="molecule type" value="Genomic_DNA"/>
</dbReference>
<dbReference type="EMBL" id="AK241674">
    <property type="protein sequence ID" value="BAH01084.1"/>
    <property type="molecule type" value="mRNA"/>
</dbReference>
<dbReference type="RefSeq" id="XP_015630063.1">
    <property type="nucleotide sequence ID" value="XM_015774577.1"/>
</dbReference>
<dbReference type="SMR" id="Q10R47"/>
<dbReference type="FunCoup" id="Q10R47">
    <property type="interactions" value="201"/>
</dbReference>
<dbReference type="STRING" id="39947.Q10R47"/>
<dbReference type="PaxDb" id="39947-Q10R47"/>
<dbReference type="EnsemblPlants" id="Os03t0171700-01">
    <property type="protein sequence ID" value="Os03t0171700-01"/>
    <property type="gene ID" value="Os03g0171700"/>
</dbReference>
<dbReference type="Gramene" id="Os03t0171700-01">
    <property type="protein sequence ID" value="Os03t0171700-01"/>
    <property type="gene ID" value="Os03g0171700"/>
</dbReference>
<dbReference type="KEGG" id="dosa:Os03g0171700"/>
<dbReference type="eggNOG" id="ENOG502SS07">
    <property type="taxonomic scope" value="Eukaryota"/>
</dbReference>
<dbReference type="HOGENOM" id="CLU_183267_0_0_1"/>
<dbReference type="InParanoid" id="Q10R47"/>
<dbReference type="OMA" id="KETCIYI"/>
<dbReference type="OrthoDB" id="988630at2759"/>
<dbReference type="Proteomes" id="UP000000763">
    <property type="component" value="Chromosome 3"/>
</dbReference>
<dbReference type="Proteomes" id="UP000007752">
    <property type="component" value="Chromosome 3"/>
</dbReference>
<dbReference type="Proteomes" id="UP000059680">
    <property type="component" value="Chromosome 3"/>
</dbReference>
<dbReference type="GO" id="GO:0046983">
    <property type="term" value="F:protein dimerization activity"/>
    <property type="evidence" value="ECO:0007669"/>
    <property type="project" value="InterPro"/>
</dbReference>
<dbReference type="GO" id="GO:0006355">
    <property type="term" value="P:regulation of DNA-templated transcription"/>
    <property type="evidence" value="ECO:0007669"/>
    <property type="project" value="InterPro"/>
</dbReference>
<dbReference type="GO" id="GO:0040008">
    <property type="term" value="P:regulation of growth"/>
    <property type="evidence" value="ECO:0007669"/>
    <property type="project" value="InterPro"/>
</dbReference>
<dbReference type="Gene3D" id="4.10.280.10">
    <property type="entry name" value="Helix-loop-helix DNA-binding domain"/>
    <property type="match status" value="1"/>
</dbReference>
<dbReference type="InterPro" id="IPR011598">
    <property type="entry name" value="bHLH_dom"/>
</dbReference>
<dbReference type="InterPro" id="IPR036638">
    <property type="entry name" value="HLH_DNA-bd_sf"/>
</dbReference>
<dbReference type="InterPro" id="IPR044293">
    <property type="entry name" value="PRE"/>
</dbReference>
<dbReference type="PANTHER" id="PTHR46446">
    <property type="entry name" value="TRANSCRIPTION FACTOR PRE"/>
    <property type="match status" value="1"/>
</dbReference>
<dbReference type="PANTHER" id="PTHR46446:SF28">
    <property type="entry name" value="TRANSCRIPTION FACTOR PRE5"/>
    <property type="match status" value="1"/>
</dbReference>
<dbReference type="Pfam" id="PF23174">
    <property type="entry name" value="bHLH_ILI"/>
    <property type="match status" value="1"/>
</dbReference>
<dbReference type="SUPFAM" id="SSF47459">
    <property type="entry name" value="HLH, helix-loop-helix DNA-binding domain"/>
    <property type="match status" value="1"/>
</dbReference>
<dbReference type="PROSITE" id="PS50888">
    <property type="entry name" value="BHLH"/>
    <property type="match status" value="1"/>
</dbReference>
<sequence>MSSRRGGGGGGGRITDEEINELISKLQALLPESSRSRGASRSSASKLLKETCSYIKSLHREVDDLSDRLSELMSTMDNNSPQAEIIRSLLR</sequence>
<organism>
    <name type="scientific">Oryza sativa subsp. japonica</name>
    <name type="common">Rice</name>
    <dbReference type="NCBI Taxonomy" id="39947"/>
    <lineage>
        <taxon>Eukaryota</taxon>
        <taxon>Viridiplantae</taxon>
        <taxon>Streptophyta</taxon>
        <taxon>Embryophyta</taxon>
        <taxon>Tracheophyta</taxon>
        <taxon>Spermatophyta</taxon>
        <taxon>Magnoliopsida</taxon>
        <taxon>Liliopsida</taxon>
        <taxon>Poales</taxon>
        <taxon>Poaceae</taxon>
        <taxon>BOP clade</taxon>
        <taxon>Oryzoideae</taxon>
        <taxon>Oryzeae</taxon>
        <taxon>Oryzinae</taxon>
        <taxon>Oryza</taxon>
        <taxon>Oryza sativa</taxon>
    </lineage>
</organism>